<gene>
    <name evidence="1" type="primary">secB</name>
    <name type="ordered locus">VF_2349</name>
</gene>
<sequence>MAEAAQAQQQNFAIQRIFLKDVSFEAPNSPTMFQKEWNPDVKLDLDTQSRELGEGVYEVVLRLTVTVKNEEETAFLCEVQQGGIFTAGQMEEAQLAHCLGAFCPNILFPYARETISSLVVKGTFPQLNLAPVNFDALFMNYLQSQAQENAAAPSEA</sequence>
<evidence type="ECO:0000255" key="1">
    <source>
        <dbReference type="HAMAP-Rule" id="MF_00821"/>
    </source>
</evidence>
<keyword id="KW-0143">Chaperone</keyword>
<keyword id="KW-0963">Cytoplasm</keyword>
<keyword id="KW-0653">Protein transport</keyword>
<keyword id="KW-1185">Reference proteome</keyword>
<keyword id="KW-0811">Translocation</keyword>
<keyword id="KW-0813">Transport</keyword>
<feature type="chain" id="PRO_0000055421" description="Protein-export protein SecB">
    <location>
        <begin position="1"/>
        <end position="156"/>
    </location>
</feature>
<protein>
    <recommendedName>
        <fullName evidence="1">Protein-export protein SecB</fullName>
    </recommendedName>
</protein>
<reference key="1">
    <citation type="journal article" date="2005" name="Proc. Natl. Acad. Sci. U.S.A.">
        <title>Complete genome sequence of Vibrio fischeri: a symbiotic bacterium with pathogenic congeners.</title>
        <authorList>
            <person name="Ruby E.G."/>
            <person name="Urbanowski M."/>
            <person name="Campbell J."/>
            <person name="Dunn A."/>
            <person name="Faini M."/>
            <person name="Gunsalus R."/>
            <person name="Lostroh P."/>
            <person name="Lupp C."/>
            <person name="McCann J."/>
            <person name="Millikan D."/>
            <person name="Schaefer A."/>
            <person name="Stabb E."/>
            <person name="Stevens A."/>
            <person name="Visick K."/>
            <person name="Whistler C."/>
            <person name="Greenberg E.P."/>
        </authorList>
    </citation>
    <scope>NUCLEOTIDE SEQUENCE [LARGE SCALE GENOMIC DNA]</scope>
    <source>
        <strain>ATCC 700601 / ES114</strain>
    </source>
</reference>
<comment type="function">
    <text evidence="1">One of the proteins required for the normal export of preproteins out of the cell cytoplasm. It is a molecular chaperone that binds to a subset of precursor proteins, maintaining them in a translocation-competent state. It also specifically binds to its receptor SecA.</text>
</comment>
<comment type="subunit">
    <text evidence="1">Homotetramer, a dimer of dimers. One homotetramer interacts with 1 SecA dimer.</text>
</comment>
<comment type="subcellular location">
    <subcellularLocation>
        <location evidence="1">Cytoplasm</location>
    </subcellularLocation>
</comment>
<comment type="similarity">
    <text evidence="1">Belongs to the SecB family.</text>
</comment>
<proteinExistence type="inferred from homology"/>
<name>SECB_ALIF1</name>
<organism>
    <name type="scientific">Aliivibrio fischeri (strain ATCC 700601 / ES114)</name>
    <name type="common">Vibrio fischeri</name>
    <dbReference type="NCBI Taxonomy" id="312309"/>
    <lineage>
        <taxon>Bacteria</taxon>
        <taxon>Pseudomonadati</taxon>
        <taxon>Pseudomonadota</taxon>
        <taxon>Gammaproteobacteria</taxon>
        <taxon>Vibrionales</taxon>
        <taxon>Vibrionaceae</taxon>
        <taxon>Aliivibrio</taxon>
    </lineage>
</organism>
<dbReference type="EMBL" id="CP000020">
    <property type="protein sequence ID" value="AAW86844.1"/>
    <property type="molecule type" value="Genomic_DNA"/>
</dbReference>
<dbReference type="RefSeq" id="WP_005421204.1">
    <property type="nucleotide sequence ID" value="NZ_CAWLES010000001.1"/>
</dbReference>
<dbReference type="RefSeq" id="YP_205732.1">
    <property type="nucleotide sequence ID" value="NC_006840.2"/>
</dbReference>
<dbReference type="SMR" id="Q5E2A2"/>
<dbReference type="STRING" id="312309.VF_2349"/>
<dbReference type="EnsemblBacteria" id="AAW86844">
    <property type="protein sequence ID" value="AAW86844"/>
    <property type="gene ID" value="VF_2349"/>
</dbReference>
<dbReference type="GeneID" id="54165071"/>
<dbReference type="KEGG" id="vfi:VF_2349"/>
<dbReference type="PATRIC" id="fig|312309.11.peg.2388"/>
<dbReference type="eggNOG" id="COG1952">
    <property type="taxonomic scope" value="Bacteria"/>
</dbReference>
<dbReference type="HOGENOM" id="CLU_111574_1_0_6"/>
<dbReference type="OrthoDB" id="9795145at2"/>
<dbReference type="Proteomes" id="UP000000537">
    <property type="component" value="Chromosome I"/>
</dbReference>
<dbReference type="GO" id="GO:0005737">
    <property type="term" value="C:cytoplasm"/>
    <property type="evidence" value="ECO:0007669"/>
    <property type="project" value="UniProtKB-SubCell"/>
</dbReference>
<dbReference type="GO" id="GO:0051082">
    <property type="term" value="F:unfolded protein binding"/>
    <property type="evidence" value="ECO:0007669"/>
    <property type="project" value="InterPro"/>
</dbReference>
<dbReference type="GO" id="GO:0006457">
    <property type="term" value="P:protein folding"/>
    <property type="evidence" value="ECO:0007669"/>
    <property type="project" value="UniProtKB-UniRule"/>
</dbReference>
<dbReference type="GO" id="GO:0051262">
    <property type="term" value="P:protein tetramerization"/>
    <property type="evidence" value="ECO:0007669"/>
    <property type="project" value="InterPro"/>
</dbReference>
<dbReference type="GO" id="GO:0015031">
    <property type="term" value="P:protein transport"/>
    <property type="evidence" value="ECO:0007669"/>
    <property type="project" value="UniProtKB-UniRule"/>
</dbReference>
<dbReference type="Gene3D" id="3.10.420.10">
    <property type="entry name" value="SecB-like"/>
    <property type="match status" value="1"/>
</dbReference>
<dbReference type="HAMAP" id="MF_00821">
    <property type="entry name" value="SecB"/>
    <property type="match status" value="1"/>
</dbReference>
<dbReference type="InterPro" id="IPR003708">
    <property type="entry name" value="SecB"/>
</dbReference>
<dbReference type="InterPro" id="IPR035958">
    <property type="entry name" value="SecB-like_sf"/>
</dbReference>
<dbReference type="NCBIfam" id="NF004393">
    <property type="entry name" value="PRK05751.1-4"/>
    <property type="match status" value="1"/>
</dbReference>
<dbReference type="NCBIfam" id="TIGR00809">
    <property type="entry name" value="secB"/>
    <property type="match status" value="1"/>
</dbReference>
<dbReference type="PANTHER" id="PTHR36918">
    <property type="match status" value="1"/>
</dbReference>
<dbReference type="PANTHER" id="PTHR36918:SF1">
    <property type="entry name" value="PROTEIN-EXPORT PROTEIN SECB"/>
    <property type="match status" value="1"/>
</dbReference>
<dbReference type="Pfam" id="PF02556">
    <property type="entry name" value="SecB"/>
    <property type="match status" value="1"/>
</dbReference>
<dbReference type="PRINTS" id="PR01594">
    <property type="entry name" value="SECBCHAPRONE"/>
</dbReference>
<dbReference type="SUPFAM" id="SSF54611">
    <property type="entry name" value="SecB-like"/>
    <property type="match status" value="1"/>
</dbReference>
<accession>Q5E2A2</accession>